<reference key="1">
    <citation type="submission" date="2006-09" db="EMBL/GenBank/DDBJ databases">
        <authorList>
            <consortium name="The Klebsiella pneumonia Genome Sequencing Project"/>
            <person name="McClelland M."/>
            <person name="Sanderson E.K."/>
            <person name="Spieth J."/>
            <person name="Clifton W.S."/>
            <person name="Latreille P."/>
            <person name="Sabo A."/>
            <person name="Pepin K."/>
            <person name="Bhonagiri V."/>
            <person name="Porwollik S."/>
            <person name="Ali J."/>
            <person name="Wilson R.K."/>
        </authorList>
    </citation>
    <scope>NUCLEOTIDE SEQUENCE [LARGE SCALE GENOMIC DNA]</scope>
    <source>
        <strain>ATCC 700721 / MGH 78578</strain>
    </source>
</reference>
<accession>A6TGB8</accession>
<evidence type="ECO:0000255" key="1">
    <source>
        <dbReference type="HAMAP-Rule" id="MF_00339"/>
    </source>
</evidence>
<dbReference type="EC" id="2.7.1.11" evidence="1"/>
<dbReference type="EMBL" id="CP000647">
    <property type="protein sequence ID" value="ABR79602.1"/>
    <property type="molecule type" value="Genomic_DNA"/>
</dbReference>
<dbReference type="RefSeq" id="WP_002882911.1">
    <property type="nucleotide sequence ID" value="NC_009648.1"/>
</dbReference>
<dbReference type="SMR" id="A6TGB8"/>
<dbReference type="STRING" id="272620.KPN_04223"/>
<dbReference type="jPOST" id="A6TGB8"/>
<dbReference type="PaxDb" id="272620-KPN_04223"/>
<dbReference type="EnsemblBacteria" id="ABR79602">
    <property type="protein sequence ID" value="ABR79602"/>
    <property type="gene ID" value="KPN_04223"/>
</dbReference>
<dbReference type="GeneID" id="93275768"/>
<dbReference type="KEGG" id="kpn:KPN_04223"/>
<dbReference type="HOGENOM" id="CLU_020655_0_1_6"/>
<dbReference type="UniPathway" id="UPA00109">
    <property type="reaction ID" value="UER00182"/>
</dbReference>
<dbReference type="Proteomes" id="UP000000265">
    <property type="component" value="Chromosome"/>
</dbReference>
<dbReference type="GO" id="GO:0005945">
    <property type="term" value="C:6-phosphofructokinase complex"/>
    <property type="evidence" value="ECO:0007669"/>
    <property type="project" value="TreeGrafter"/>
</dbReference>
<dbReference type="GO" id="GO:0003872">
    <property type="term" value="F:6-phosphofructokinase activity"/>
    <property type="evidence" value="ECO:0007669"/>
    <property type="project" value="UniProtKB-UniRule"/>
</dbReference>
<dbReference type="GO" id="GO:0016208">
    <property type="term" value="F:AMP binding"/>
    <property type="evidence" value="ECO:0007669"/>
    <property type="project" value="TreeGrafter"/>
</dbReference>
<dbReference type="GO" id="GO:0005524">
    <property type="term" value="F:ATP binding"/>
    <property type="evidence" value="ECO:0007669"/>
    <property type="project" value="UniProtKB-KW"/>
</dbReference>
<dbReference type="GO" id="GO:0070095">
    <property type="term" value="F:fructose-6-phosphate binding"/>
    <property type="evidence" value="ECO:0007669"/>
    <property type="project" value="TreeGrafter"/>
</dbReference>
<dbReference type="GO" id="GO:0042802">
    <property type="term" value="F:identical protein binding"/>
    <property type="evidence" value="ECO:0007669"/>
    <property type="project" value="TreeGrafter"/>
</dbReference>
<dbReference type="GO" id="GO:0046872">
    <property type="term" value="F:metal ion binding"/>
    <property type="evidence" value="ECO:0007669"/>
    <property type="project" value="UniProtKB-KW"/>
</dbReference>
<dbReference type="GO" id="GO:0048029">
    <property type="term" value="F:monosaccharide binding"/>
    <property type="evidence" value="ECO:0007669"/>
    <property type="project" value="TreeGrafter"/>
</dbReference>
<dbReference type="GO" id="GO:0061621">
    <property type="term" value="P:canonical glycolysis"/>
    <property type="evidence" value="ECO:0007669"/>
    <property type="project" value="TreeGrafter"/>
</dbReference>
<dbReference type="GO" id="GO:0030388">
    <property type="term" value="P:fructose 1,6-bisphosphate metabolic process"/>
    <property type="evidence" value="ECO:0007669"/>
    <property type="project" value="TreeGrafter"/>
</dbReference>
<dbReference type="GO" id="GO:0006002">
    <property type="term" value="P:fructose 6-phosphate metabolic process"/>
    <property type="evidence" value="ECO:0007669"/>
    <property type="project" value="InterPro"/>
</dbReference>
<dbReference type="CDD" id="cd00763">
    <property type="entry name" value="Bacterial_PFK"/>
    <property type="match status" value="1"/>
</dbReference>
<dbReference type="FunFam" id="3.40.50.450:FF:000001">
    <property type="entry name" value="ATP-dependent 6-phosphofructokinase"/>
    <property type="match status" value="1"/>
</dbReference>
<dbReference type="FunFam" id="3.40.50.460:FF:000002">
    <property type="entry name" value="ATP-dependent 6-phosphofructokinase"/>
    <property type="match status" value="1"/>
</dbReference>
<dbReference type="Gene3D" id="3.40.50.450">
    <property type="match status" value="1"/>
</dbReference>
<dbReference type="Gene3D" id="3.40.50.460">
    <property type="entry name" value="Phosphofructokinase domain"/>
    <property type="match status" value="1"/>
</dbReference>
<dbReference type="HAMAP" id="MF_00339">
    <property type="entry name" value="Phosphofructokinase_I_B1"/>
    <property type="match status" value="1"/>
</dbReference>
<dbReference type="InterPro" id="IPR022953">
    <property type="entry name" value="ATP_PFK"/>
</dbReference>
<dbReference type="InterPro" id="IPR012003">
    <property type="entry name" value="ATP_PFK_prok-type"/>
</dbReference>
<dbReference type="InterPro" id="IPR012828">
    <property type="entry name" value="PFKA_ATP_prok"/>
</dbReference>
<dbReference type="InterPro" id="IPR015912">
    <property type="entry name" value="Phosphofructokinase_CS"/>
</dbReference>
<dbReference type="InterPro" id="IPR000023">
    <property type="entry name" value="Phosphofructokinase_dom"/>
</dbReference>
<dbReference type="InterPro" id="IPR035966">
    <property type="entry name" value="PKF_sf"/>
</dbReference>
<dbReference type="NCBIfam" id="TIGR02482">
    <property type="entry name" value="PFKA_ATP"/>
    <property type="match status" value="1"/>
</dbReference>
<dbReference type="NCBIfam" id="NF002872">
    <property type="entry name" value="PRK03202.1"/>
    <property type="match status" value="1"/>
</dbReference>
<dbReference type="PANTHER" id="PTHR13697:SF4">
    <property type="entry name" value="ATP-DEPENDENT 6-PHOSPHOFRUCTOKINASE"/>
    <property type="match status" value="1"/>
</dbReference>
<dbReference type="PANTHER" id="PTHR13697">
    <property type="entry name" value="PHOSPHOFRUCTOKINASE"/>
    <property type="match status" value="1"/>
</dbReference>
<dbReference type="Pfam" id="PF00365">
    <property type="entry name" value="PFK"/>
    <property type="match status" value="1"/>
</dbReference>
<dbReference type="PIRSF" id="PIRSF000532">
    <property type="entry name" value="ATP_PFK_prok"/>
    <property type="match status" value="1"/>
</dbReference>
<dbReference type="PRINTS" id="PR00476">
    <property type="entry name" value="PHFRCTKINASE"/>
</dbReference>
<dbReference type="SUPFAM" id="SSF53784">
    <property type="entry name" value="Phosphofructokinase"/>
    <property type="match status" value="1"/>
</dbReference>
<dbReference type="PROSITE" id="PS00433">
    <property type="entry name" value="PHOSPHOFRUCTOKINASE"/>
    <property type="match status" value="1"/>
</dbReference>
<organism>
    <name type="scientific">Klebsiella pneumoniae subsp. pneumoniae (strain ATCC 700721 / MGH 78578)</name>
    <dbReference type="NCBI Taxonomy" id="272620"/>
    <lineage>
        <taxon>Bacteria</taxon>
        <taxon>Pseudomonadati</taxon>
        <taxon>Pseudomonadota</taxon>
        <taxon>Gammaproteobacteria</taxon>
        <taxon>Enterobacterales</taxon>
        <taxon>Enterobacteriaceae</taxon>
        <taxon>Klebsiella/Raoultella group</taxon>
        <taxon>Klebsiella</taxon>
        <taxon>Klebsiella pneumoniae complex</taxon>
    </lineage>
</organism>
<feature type="chain" id="PRO_1000059768" description="ATP-dependent 6-phosphofructokinase">
    <location>
        <begin position="1"/>
        <end position="320"/>
    </location>
</feature>
<feature type="active site" description="Proton acceptor" evidence="1">
    <location>
        <position position="128"/>
    </location>
</feature>
<feature type="binding site" evidence="1">
    <location>
        <position position="12"/>
    </location>
    <ligand>
        <name>ATP</name>
        <dbReference type="ChEBI" id="CHEBI:30616"/>
    </ligand>
</feature>
<feature type="binding site" evidence="1">
    <location>
        <begin position="22"/>
        <end position="26"/>
    </location>
    <ligand>
        <name>ADP</name>
        <dbReference type="ChEBI" id="CHEBI:456216"/>
        <note>allosteric activator; ligand shared between dimeric partners</note>
    </ligand>
</feature>
<feature type="binding site" evidence="1">
    <location>
        <begin position="55"/>
        <end position="60"/>
    </location>
    <ligand>
        <name>ADP</name>
        <dbReference type="ChEBI" id="CHEBI:456216"/>
        <note>allosteric activator; ligand shared between dimeric partners</note>
    </ligand>
</feature>
<feature type="binding site" evidence="1">
    <location>
        <begin position="73"/>
        <end position="74"/>
    </location>
    <ligand>
        <name>ATP</name>
        <dbReference type="ChEBI" id="CHEBI:30616"/>
    </ligand>
</feature>
<feature type="binding site" evidence="1">
    <location>
        <begin position="103"/>
        <end position="106"/>
    </location>
    <ligand>
        <name>ATP</name>
        <dbReference type="ChEBI" id="CHEBI:30616"/>
    </ligand>
</feature>
<feature type="binding site" evidence="1">
    <location>
        <position position="104"/>
    </location>
    <ligand>
        <name>Mg(2+)</name>
        <dbReference type="ChEBI" id="CHEBI:18420"/>
        <note>catalytic</note>
    </ligand>
</feature>
<feature type="binding site" description="in other chain" evidence="1">
    <location>
        <begin position="126"/>
        <end position="128"/>
    </location>
    <ligand>
        <name>substrate</name>
        <note>ligand shared between dimeric partners</note>
    </ligand>
</feature>
<feature type="binding site" description="in other chain" evidence="1">
    <location>
        <position position="155"/>
    </location>
    <ligand>
        <name>ADP</name>
        <dbReference type="ChEBI" id="CHEBI:456216"/>
        <note>allosteric activator; ligand shared between dimeric partners</note>
    </ligand>
</feature>
<feature type="binding site" evidence="1">
    <location>
        <position position="163"/>
    </location>
    <ligand>
        <name>substrate</name>
        <note>ligand shared between dimeric partners</note>
    </ligand>
</feature>
<feature type="binding site" description="in other chain" evidence="1">
    <location>
        <begin position="170"/>
        <end position="172"/>
    </location>
    <ligand>
        <name>substrate</name>
        <note>ligand shared between dimeric partners</note>
    </ligand>
</feature>
<feature type="binding site" description="in other chain" evidence="1">
    <location>
        <begin position="186"/>
        <end position="188"/>
    </location>
    <ligand>
        <name>ADP</name>
        <dbReference type="ChEBI" id="CHEBI:456216"/>
        <note>allosteric activator; ligand shared between dimeric partners</note>
    </ligand>
</feature>
<feature type="binding site" description="in other chain" evidence="1">
    <location>
        <position position="212"/>
    </location>
    <ligand>
        <name>ADP</name>
        <dbReference type="ChEBI" id="CHEBI:456216"/>
        <note>allosteric activator; ligand shared between dimeric partners</note>
    </ligand>
</feature>
<feature type="binding site" description="in other chain" evidence="1">
    <location>
        <begin position="214"/>
        <end position="216"/>
    </location>
    <ligand>
        <name>ADP</name>
        <dbReference type="ChEBI" id="CHEBI:456216"/>
        <note>allosteric activator; ligand shared between dimeric partners</note>
    </ligand>
</feature>
<feature type="binding site" description="in other chain" evidence="1">
    <location>
        <position position="223"/>
    </location>
    <ligand>
        <name>substrate</name>
        <note>ligand shared between dimeric partners</note>
    </ligand>
</feature>
<feature type="binding site" evidence="1">
    <location>
        <position position="244"/>
    </location>
    <ligand>
        <name>substrate</name>
        <note>ligand shared between dimeric partners</note>
    </ligand>
</feature>
<feature type="binding site" description="in other chain" evidence="1">
    <location>
        <begin position="250"/>
        <end position="253"/>
    </location>
    <ligand>
        <name>substrate</name>
        <note>ligand shared between dimeric partners</note>
    </ligand>
</feature>
<comment type="function">
    <text evidence="1">Catalyzes the phosphorylation of D-fructose 6-phosphate to fructose 1,6-bisphosphate by ATP, the first committing step of glycolysis.</text>
</comment>
<comment type="catalytic activity">
    <reaction evidence="1">
        <text>beta-D-fructose 6-phosphate + ATP = beta-D-fructose 1,6-bisphosphate + ADP + H(+)</text>
        <dbReference type="Rhea" id="RHEA:16109"/>
        <dbReference type="ChEBI" id="CHEBI:15378"/>
        <dbReference type="ChEBI" id="CHEBI:30616"/>
        <dbReference type="ChEBI" id="CHEBI:32966"/>
        <dbReference type="ChEBI" id="CHEBI:57634"/>
        <dbReference type="ChEBI" id="CHEBI:456216"/>
        <dbReference type="EC" id="2.7.1.11"/>
    </reaction>
</comment>
<comment type="cofactor">
    <cofactor evidence="1">
        <name>Mg(2+)</name>
        <dbReference type="ChEBI" id="CHEBI:18420"/>
    </cofactor>
</comment>
<comment type="activity regulation">
    <text evidence="1">Allosterically activated by ADP and other diphosphonucleosides, and allosterically inhibited by phosphoenolpyruvate.</text>
</comment>
<comment type="pathway">
    <text evidence="1">Carbohydrate degradation; glycolysis; D-glyceraldehyde 3-phosphate and glycerone phosphate from D-glucose: step 3/4.</text>
</comment>
<comment type="subunit">
    <text evidence="1">Homotetramer.</text>
</comment>
<comment type="subcellular location">
    <subcellularLocation>
        <location evidence="1">Cytoplasm</location>
    </subcellularLocation>
</comment>
<comment type="similarity">
    <text evidence="1">Belongs to the phosphofructokinase type A (PFKA) family. ATP-dependent PFK group I subfamily. Prokaryotic clade 'B1' sub-subfamily.</text>
</comment>
<sequence>MIKKIGVLTSGGDAPGMNAAIRGVVRAALTEGLEVFGIYDGYLGLYEDRMVQLDRYSVSDMINRGGTFLGSARFPEFREEHIRAVAIENMKKRGLDALVVIGGDGSYMGAMRLTEMGFPCIGLPGTIDNDIKGTDYTIGFFTALSTVVEAIDRLRDTSSSHQRISVVEVMGRYCGDLTLAAAIAGGCEFIMVPEVEYTRDDLVAEIKAGIAKGKKHAIVAITEHMCDVDELASYIEKETGRETRATVLGHIQRGGSPVPYDRILASRMGAYAIELLLQGHGGRCVGIQNEKLVHHDIIDAIENMKRPFKNDWLDCAKKLY</sequence>
<name>PFKA_KLEP7</name>
<protein>
    <recommendedName>
        <fullName evidence="1">ATP-dependent 6-phosphofructokinase</fullName>
        <shortName evidence="1">ATP-PFK</shortName>
        <shortName evidence="1">Phosphofructokinase</shortName>
        <ecNumber evidence="1">2.7.1.11</ecNumber>
    </recommendedName>
    <alternativeName>
        <fullName evidence="1">Phosphohexokinase</fullName>
    </alternativeName>
</protein>
<gene>
    <name evidence="1" type="primary">pfkA</name>
    <name type="ordered locus">KPN78578_41780</name>
    <name type="ORF">KPN_04223</name>
</gene>
<keyword id="KW-0021">Allosteric enzyme</keyword>
<keyword id="KW-0067">ATP-binding</keyword>
<keyword id="KW-0963">Cytoplasm</keyword>
<keyword id="KW-0324">Glycolysis</keyword>
<keyword id="KW-0418">Kinase</keyword>
<keyword id="KW-0460">Magnesium</keyword>
<keyword id="KW-0479">Metal-binding</keyword>
<keyword id="KW-0547">Nucleotide-binding</keyword>
<keyword id="KW-0808">Transferase</keyword>
<proteinExistence type="inferred from homology"/>